<organism>
    <name type="scientific">Schizosaccharomyces pombe (strain 972 / ATCC 24843)</name>
    <name type="common">Fission yeast</name>
    <dbReference type="NCBI Taxonomy" id="284812"/>
    <lineage>
        <taxon>Eukaryota</taxon>
        <taxon>Fungi</taxon>
        <taxon>Dikarya</taxon>
        <taxon>Ascomycota</taxon>
        <taxon>Taphrinomycotina</taxon>
        <taxon>Schizosaccharomycetes</taxon>
        <taxon>Schizosaccharomycetales</taxon>
        <taxon>Schizosaccharomycetaceae</taxon>
        <taxon>Schizosaccharomyces</taxon>
    </lineage>
</organism>
<accession>P0CT66</accession>
<accession>O94754</accession>
<accession>Q9USH4</accession>
<gene>
    <name type="primary">rps1801</name>
    <name type="synonym">rps18a</name>
    <name type="ORF">SPBC16D10.11c</name>
</gene>
<protein>
    <recommendedName>
        <fullName evidence="3">Small ribosomal subunit protein uS13A</fullName>
    </recommendedName>
    <alternativeName>
        <fullName>40S ribosomal protein S18-A</fullName>
    </alternativeName>
</protein>
<comment type="function">
    <text evidence="1">Component of the ribosome, a large ribonucleoprotein complex responsible for the synthesis of proteins in the cell. The small ribosomal subunit (SSU) binds messenger RNAs (mRNAs) and translates the encoded message by selecting cognate aminoacyl-transfer RNA (tRNA) molecules. The large subunit (LSU) contains the ribosomal catalytic site termed the peptidyl transferase center (PTC), which catalyzes the formation of peptide bonds, thereby polymerizing the amino acids delivered by tRNAs into a polypeptide chain. The nascent polypeptides leave the ribosome through a tunnel in the LSU and interact with protein factors that function in enzymatic processing, targeting, and the membrane insertion of nascent chains at the exit of the ribosomal tunnel.</text>
</comment>
<comment type="subunit">
    <text evidence="1">Component of the small ribosomal subunit (SSU). Mature yeast ribosomes consist of a small (40S) and a large (60S) subunit. The 40S small subunit contains 1 molecule of ribosomal RNA (18S rRNA) and at least 33 different proteins. The large 60S subunit contains 3 rRNA molecules (25S, 5.8S and 5S rRNA) and at least 46 different proteins.</text>
</comment>
<comment type="subcellular location">
    <subcellularLocation>
        <location evidence="2">Cytoplasm</location>
    </subcellularLocation>
</comment>
<comment type="miscellaneous">
    <text>There are 2 genes for uS13 in S.pombe.</text>
</comment>
<comment type="similarity">
    <text evidence="3">Belongs to the universal ribosomal protein uS13 family.</text>
</comment>
<keyword id="KW-0963">Cytoplasm</keyword>
<keyword id="KW-1185">Reference proteome</keyword>
<keyword id="KW-0687">Ribonucleoprotein</keyword>
<keyword id="KW-0689">Ribosomal protein</keyword>
<keyword id="KW-0694">RNA-binding</keyword>
<keyword id="KW-0699">rRNA-binding</keyword>
<proteinExistence type="inferred from homology"/>
<reference key="1">
    <citation type="journal article" date="2002" name="Nature">
        <title>The genome sequence of Schizosaccharomyces pombe.</title>
        <authorList>
            <person name="Wood V."/>
            <person name="Gwilliam R."/>
            <person name="Rajandream M.A."/>
            <person name="Lyne M.H."/>
            <person name="Lyne R."/>
            <person name="Stewart A."/>
            <person name="Sgouros J.G."/>
            <person name="Peat N."/>
            <person name="Hayles J."/>
            <person name="Baker S.G."/>
            <person name="Basham D."/>
            <person name="Bowman S."/>
            <person name="Brooks K."/>
            <person name="Brown D."/>
            <person name="Brown S."/>
            <person name="Chillingworth T."/>
            <person name="Churcher C.M."/>
            <person name="Collins M."/>
            <person name="Connor R."/>
            <person name="Cronin A."/>
            <person name="Davis P."/>
            <person name="Feltwell T."/>
            <person name="Fraser A."/>
            <person name="Gentles S."/>
            <person name="Goble A."/>
            <person name="Hamlin N."/>
            <person name="Harris D.E."/>
            <person name="Hidalgo J."/>
            <person name="Hodgson G."/>
            <person name="Holroyd S."/>
            <person name="Hornsby T."/>
            <person name="Howarth S."/>
            <person name="Huckle E.J."/>
            <person name="Hunt S."/>
            <person name="Jagels K."/>
            <person name="James K.D."/>
            <person name="Jones L."/>
            <person name="Jones M."/>
            <person name="Leather S."/>
            <person name="McDonald S."/>
            <person name="McLean J."/>
            <person name="Mooney P."/>
            <person name="Moule S."/>
            <person name="Mungall K.L."/>
            <person name="Murphy L.D."/>
            <person name="Niblett D."/>
            <person name="Odell C."/>
            <person name="Oliver K."/>
            <person name="O'Neil S."/>
            <person name="Pearson D."/>
            <person name="Quail M.A."/>
            <person name="Rabbinowitsch E."/>
            <person name="Rutherford K.M."/>
            <person name="Rutter S."/>
            <person name="Saunders D."/>
            <person name="Seeger K."/>
            <person name="Sharp S."/>
            <person name="Skelton J."/>
            <person name="Simmonds M.N."/>
            <person name="Squares R."/>
            <person name="Squares S."/>
            <person name="Stevens K."/>
            <person name="Taylor K."/>
            <person name="Taylor R.G."/>
            <person name="Tivey A."/>
            <person name="Walsh S.V."/>
            <person name="Warren T."/>
            <person name="Whitehead S."/>
            <person name="Woodward J.R."/>
            <person name="Volckaert G."/>
            <person name="Aert R."/>
            <person name="Robben J."/>
            <person name="Grymonprez B."/>
            <person name="Weltjens I."/>
            <person name="Vanstreels E."/>
            <person name="Rieger M."/>
            <person name="Schaefer M."/>
            <person name="Mueller-Auer S."/>
            <person name="Gabel C."/>
            <person name="Fuchs M."/>
            <person name="Duesterhoeft A."/>
            <person name="Fritzc C."/>
            <person name="Holzer E."/>
            <person name="Moestl D."/>
            <person name="Hilbert H."/>
            <person name="Borzym K."/>
            <person name="Langer I."/>
            <person name="Beck A."/>
            <person name="Lehrach H."/>
            <person name="Reinhardt R."/>
            <person name="Pohl T.M."/>
            <person name="Eger P."/>
            <person name="Zimmermann W."/>
            <person name="Wedler H."/>
            <person name="Wambutt R."/>
            <person name="Purnelle B."/>
            <person name="Goffeau A."/>
            <person name="Cadieu E."/>
            <person name="Dreano S."/>
            <person name="Gloux S."/>
            <person name="Lelaure V."/>
            <person name="Mottier S."/>
            <person name="Galibert F."/>
            <person name="Aves S.J."/>
            <person name="Xiang Z."/>
            <person name="Hunt C."/>
            <person name="Moore K."/>
            <person name="Hurst S.M."/>
            <person name="Lucas M."/>
            <person name="Rochet M."/>
            <person name="Gaillardin C."/>
            <person name="Tallada V.A."/>
            <person name="Garzon A."/>
            <person name="Thode G."/>
            <person name="Daga R.R."/>
            <person name="Cruzado L."/>
            <person name="Jimenez J."/>
            <person name="Sanchez M."/>
            <person name="del Rey F."/>
            <person name="Benito J."/>
            <person name="Dominguez A."/>
            <person name="Revuelta J.L."/>
            <person name="Moreno S."/>
            <person name="Armstrong J."/>
            <person name="Forsburg S.L."/>
            <person name="Cerutti L."/>
            <person name="Lowe T."/>
            <person name="McCombie W.R."/>
            <person name="Paulsen I."/>
            <person name="Potashkin J."/>
            <person name="Shpakovski G.V."/>
            <person name="Ussery D."/>
            <person name="Barrell B.G."/>
            <person name="Nurse P."/>
        </authorList>
    </citation>
    <scope>NUCLEOTIDE SEQUENCE [LARGE SCALE GENOMIC DNA]</scope>
    <source>
        <strain>972 / ATCC 24843</strain>
    </source>
</reference>
<reference key="2">
    <citation type="journal article" date="2006" name="Nat. Biotechnol.">
        <title>ORFeome cloning and global analysis of protein localization in the fission yeast Schizosaccharomyces pombe.</title>
        <authorList>
            <person name="Matsuyama A."/>
            <person name="Arai R."/>
            <person name="Yashiroda Y."/>
            <person name="Shirai A."/>
            <person name="Kamata A."/>
            <person name="Sekido S."/>
            <person name="Kobayashi Y."/>
            <person name="Hashimoto A."/>
            <person name="Hamamoto M."/>
            <person name="Hiraoka Y."/>
            <person name="Horinouchi S."/>
            <person name="Yoshida M."/>
        </authorList>
    </citation>
    <scope>SUBCELLULAR LOCATION [LARGE SCALE ANALYSIS]</scope>
</reference>
<sequence>MSLVVPDNFQHILRLLNTNVDGKVKVMFAMTQIKGVGRRYANIVCKKADIDMSKRAGELTTEELERIVTIIQNPSQFKIPSWFLNRQKDINDGKSFQLLANNVDSKLREDLERLKKIQTHRGLRHALDLRVRGQHTKTTGRRGKTVGVSKKK</sequence>
<feature type="chain" id="PRO_0000132226" description="Small ribosomal subunit protein uS13A">
    <location>
        <begin position="1"/>
        <end position="152"/>
    </location>
</feature>
<evidence type="ECO:0000250" key="1">
    <source>
        <dbReference type="UniProtKB" id="P0CX55"/>
    </source>
</evidence>
<evidence type="ECO:0000269" key="2">
    <source>
    </source>
</evidence>
<evidence type="ECO:0000305" key="3"/>
<dbReference type="EMBL" id="CU329671">
    <property type="protein sequence ID" value="CAB38515.1"/>
    <property type="molecule type" value="Genomic_DNA"/>
</dbReference>
<dbReference type="PIR" id="T39575">
    <property type="entry name" value="T39575"/>
</dbReference>
<dbReference type="RefSeq" id="NP_596506.1">
    <property type="nucleotide sequence ID" value="NM_001022427.2"/>
</dbReference>
<dbReference type="SMR" id="P0CT66"/>
<dbReference type="FunCoup" id="P0CT66">
    <property type="interactions" value="588"/>
</dbReference>
<dbReference type="STRING" id="284812.P0CT66"/>
<dbReference type="iPTMnet" id="P0CT66"/>
<dbReference type="PaxDb" id="4896-SPBC16D10.11c.1"/>
<dbReference type="EnsemblFungi" id="SPBC16D10.11c.1">
    <property type="protein sequence ID" value="SPBC16D10.11c.1:pep"/>
    <property type="gene ID" value="SPBC16D10.11c"/>
</dbReference>
<dbReference type="EnsemblFungi" id="SPCC1259.01c.1">
    <property type="protein sequence ID" value="SPCC1259.01c.1:pep"/>
    <property type="gene ID" value="SPCC1259.01c"/>
</dbReference>
<dbReference type="GeneID" id="2540180"/>
<dbReference type="KEGG" id="spo:2540180"/>
<dbReference type="KEGG" id="spo:3361064"/>
<dbReference type="PomBase" id="SPBC16D10.11c">
    <property type="gene designation" value="rps1801"/>
</dbReference>
<dbReference type="VEuPathDB" id="FungiDB:SPBC16D10.11c"/>
<dbReference type="VEuPathDB" id="FungiDB:SPCC1259.01c"/>
<dbReference type="eggNOG" id="KOG3311">
    <property type="taxonomic scope" value="Eukaryota"/>
</dbReference>
<dbReference type="InParanoid" id="P0CT66"/>
<dbReference type="OMA" id="SYKGVRH"/>
<dbReference type="PhylomeDB" id="P0CT66"/>
<dbReference type="Reactome" id="R-SPO-156827">
    <property type="pathway name" value="L13a-mediated translational silencing of Ceruloplasmin expression"/>
</dbReference>
<dbReference type="Reactome" id="R-SPO-1799339">
    <property type="pathway name" value="SRP-dependent cotranslational protein targeting to membrane"/>
</dbReference>
<dbReference type="Reactome" id="R-SPO-72649">
    <property type="pathway name" value="Translation initiation complex formation"/>
</dbReference>
<dbReference type="Reactome" id="R-SPO-72689">
    <property type="pathway name" value="Formation of a pool of free 40S subunits"/>
</dbReference>
<dbReference type="Reactome" id="R-SPO-72695">
    <property type="pathway name" value="Formation of the ternary complex, and subsequently, the 43S complex"/>
</dbReference>
<dbReference type="Reactome" id="R-SPO-72702">
    <property type="pathway name" value="Ribosomal scanning and start codon recognition"/>
</dbReference>
<dbReference type="Reactome" id="R-SPO-72706">
    <property type="pathway name" value="GTP hydrolysis and joining of the 60S ribosomal subunit"/>
</dbReference>
<dbReference type="Reactome" id="R-SPO-975956">
    <property type="pathway name" value="Nonsense Mediated Decay (NMD) independent of the Exon Junction Complex (EJC)"/>
</dbReference>
<dbReference type="Reactome" id="R-SPO-975957">
    <property type="pathway name" value="Nonsense Mediated Decay (NMD) enhanced by the Exon Junction Complex (EJC)"/>
</dbReference>
<dbReference type="PRO" id="PR:P0CT66"/>
<dbReference type="Proteomes" id="UP000002485">
    <property type="component" value="Chromosome II"/>
</dbReference>
<dbReference type="GO" id="GO:0005829">
    <property type="term" value="C:cytosol"/>
    <property type="evidence" value="ECO:0007005"/>
    <property type="project" value="PomBase"/>
</dbReference>
<dbReference type="GO" id="GO:0022627">
    <property type="term" value="C:cytosolic small ribosomal subunit"/>
    <property type="evidence" value="ECO:0000266"/>
    <property type="project" value="PomBase"/>
</dbReference>
<dbReference type="GO" id="GO:0015935">
    <property type="term" value="C:small ribosomal subunit"/>
    <property type="evidence" value="ECO:0000318"/>
    <property type="project" value="GO_Central"/>
</dbReference>
<dbReference type="GO" id="GO:0019843">
    <property type="term" value="F:rRNA binding"/>
    <property type="evidence" value="ECO:0007669"/>
    <property type="project" value="UniProtKB-KW"/>
</dbReference>
<dbReference type="GO" id="GO:0003735">
    <property type="term" value="F:structural constituent of ribosome"/>
    <property type="evidence" value="ECO:0000266"/>
    <property type="project" value="PomBase"/>
</dbReference>
<dbReference type="GO" id="GO:0002181">
    <property type="term" value="P:cytoplasmic translation"/>
    <property type="evidence" value="ECO:0000266"/>
    <property type="project" value="PomBase"/>
</dbReference>
<dbReference type="GO" id="GO:0042254">
    <property type="term" value="P:ribosome biogenesis"/>
    <property type="evidence" value="ECO:0000266"/>
    <property type="project" value="PomBase"/>
</dbReference>
<dbReference type="FunFam" id="1.10.8.50:FF:000002">
    <property type="entry name" value="40S ribosomal protein S18"/>
    <property type="match status" value="1"/>
</dbReference>
<dbReference type="FunFam" id="4.10.910.10:FF:000002">
    <property type="entry name" value="40S ribosomal protein S18"/>
    <property type="match status" value="1"/>
</dbReference>
<dbReference type="Gene3D" id="1.10.8.50">
    <property type="match status" value="1"/>
</dbReference>
<dbReference type="Gene3D" id="4.10.910.10">
    <property type="entry name" value="30s ribosomal protein s13, domain 2"/>
    <property type="match status" value="1"/>
</dbReference>
<dbReference type="HAMAP" id="MF_01315">
    <property type="entry name" value="Ribosomal_uS13"/>
    <property type="match status" value="1"/>
</dbReference>
<dbReference type="InterPro" id="IPR027437">
    <property type="entry name" value="Rbsml_uS13_C"/>
</dbReference>
<dbReference type="InterPro" id="IPR001892">
    <property type="entry name" value="Ribosomal_uS13"/>
</dbReference>
<dbReference type="InterPro" id="IPR010979">
    <property type="entry name" value="Ribosomal_uS13-like_H2TH"/>
</dbReference>
<dbReference type="InterPro" id="IPR018269">
    <property type="entry name" value="Ribosomal_uS13_CS"/>
</dbReference>
<dbReference type="NCBIfam" id="NF003140">
    <property type="entry name" value="PRK04053.1"/>
    <property type="match status" value="1"/>
</dbReference>
<dbReference type="PANTHER" id="PTHR10871">
    <property type="entry name" value="30S RIBOSOMAL PROTEIN S13/40S RIBOSOMAL PROTEIN S18"/>
    <property type="match status" value="1"/>
</dbReference>
<dbReference type="PANTHER" id="PTHR10871:SF3">
    <property type="entry name" value="SMALL RIBOSOMAL SUBUNIT PROTEIN US13"/>
    <property type="match status" value="1"/>
</dbReference>
<dbReference type="Pfam" id="PF00416">
    <property type="entry name" value="Ribosomal_S13"/>
    <property type="match status" value="1"/>
</dbReference>
<dbReference type="PIRSF" id="PIRSF002134">
    <property type="entry name" value="Ribosomal_S13"/>
    <property type="match status" value="1"/>
</dbReference>
<dbReference type="SUPFAM" id="SSF46946">
    <property type="entry name" value="S13-like H2TH domain"/>
    <property type="match status" value="1"/>
</dbReference>
<dbReference type="PROSITE" id="PS00646">
    <property type="entry name" value="RIBOSOMAL_S13_1"/>
    <property type="match status" value="1"/>
</dbReference>
<dbReference type="PROSITE" id="PS50159">
    <property type="entry name" value="RIBOSOMAL_S13_2"/>
    <property type="match status" value="1"/>
</dbReference>
<name>RS18A_SCHPO</name>